<name>RNH3_STRTD</name>
<reference key="1">
    <citation type="journal article" date="2006" name="Proc. Natl. Acad. Sci. U.S.A.">
        <title>Comparative genomics of the lactic acid bacteria.</title>
        <authorList>
            <person name="Makarova K.S."/>
            <person name="Slesarev A."/>
            <person name="Wolf Y.I."/>
            <person name="Sorokin A."/>
            <person name="Mirkin B."/>
            <person name="Koonin E.V."/>
            <person name="Pavlov A."/>
            <person name="Pavlova N."/>
            <person name="Karamychev V."/>
            <person name="Polouchine N."/>
            <person name="Shakhova V."/>
            <person name="Grigoriev I."/>
            <person name="Lou Y."/>
            <person name="Rohksar D."/>
            <person name="Lucas S."/>
            <person name="Huang K."/>
            <person name="Goodstein D.M."/>
            <person name="Hawkins T."/>
            <person name="Plengvidhya V."/>
            <person name="Welker D."/>
            <person name="Hughes J."/>
            <person name="Goh Y."/>
            <person name="Benson A."/>
            <person name="Baldwin K."/>
            <person name="Lee J.-H."/>
            <person name="Diaz-Muniz I."/>
            <person name="Dosti B."/>
            <person name="Smeianov V."/>
            <person name="Wechter W."/>
            <person name="Barabote R."/>
            <person name="Lorca G."/>
            <person name="Altermann E."/>
            <person name="Barrangou R."/>
            <person name="Ganesan B."/>
            <person name="Xie Y."/>
            <person name="Rawsthorne H."/>
            <person name="Tamir D."/>
            <person name="Parker C."/>
            <person name="Breidt F."/>
            <person name="Broadbent J.R."/>
            <person name="Hutkins R."/>
            <person name="O'Sullivan D."/>
            <person name="Steele J."/>
            <person name="Unlu G."/>
            <person name="Saier M.H. Jr."/>
            <person name="Klaenhammer T."/>
            <person name="Richardson P."/>
            <person name="Kozyavkin S."/>
            <person name="Weimer B.C."/>
            <person name="Mills D.A."/>
        </authorList>
    </citation>
    <scope>NUCLEOTIDE SEQUENCE [LARGE SCALE GENOMIC DNA]</scope>
    <source>
        <strain>ATCC BAA-491 / LMD-9</strain>
    </source>
</reference>
<proteinExistence type="inferred from homology"/>
<organism>
    <name type="scientific">Streptococcus thermophilus (strain ATCC BAA-491 / LMD-9)</name>
    <dbReference type="NCBI Taxonomy" id="322159"/>
    <lineage>
        <taxon>Bacteria</taxon>
        <taxon>Bacillati</taxon>
        <taxon>Bacillota</taxon>
        <taxon>Bacilli</taxon>
        <taxon>Lactobacillales</taxon>
        <taxon>Streptococcaceae</taxon>
        <taxon>Streptococcus</taxon>
    </lineage>
</organism>
<sequence length="296" mass="32140">MGTIVLKMTAEQISVLQKDLASYATATKNPYAFFSAKVDGTSVIAYTSGKVTFQGAKPEILASRFGYQAEPKQSPDGQNLALIGSDEVGNGSYFGGLAVVASLVTPADHAFLKSLGVDDSKNLNDSKIRQIAPLLEEKIPHKALLLSPRKYNEVVGDGKAHNAVSVKVALHNQAIFLLLQSGAKPDKIVIDAFISEKNYQKYLKNERNHFEFPITLEEKAEGKYLAVAVSSIIARNLFLENLDKLSQEVGYTLPSGAGAKSDQVAAKLLQAYGDQALQTTAKYHFANTKKAYQRLK</sequence>
<gene>
    <name evidence="1" type="primary">rnhC</name>
    <name type="ordered locus">STER_1740</name>
</gene>
<keyword id="KW-0963">Cytoplasm</keyword>
<keyword id="KW-0255">Endonuclease</keyword>
<keyword id="KW-0378">Hydrolase</keyword>
<keyword id="KW-0460">Magnesium</keyword>
<keyword id="KW-0479">Metal-binding</keyword>
<keyword id="KW-0540">Nuclease</keyword>
<dbReference type="EC" id="3.1.26.4" evidence="1"/>
<dbReference type="EMBL" id="CP000419">
    <property type="protein sequence ID" value="ABJ66881.1"/>
    <property type="molecule type" value="Genomic_DNA"/>
</dbReference>
<dbReference type="RefSeq" id="WP_011681634.1">
    <property type="nucleotide sequence ID" value="NZ_CP086001.1"/>
</dbReference>
<dbReference type="SMR" id="Q03IU1"/>
<dbReference type="KEGG" id="ste:STER_1740"/>
<dbReference type="HOGENOM" id="CLU_059546_1_0_9"/>
<dbReference type="GO" id="GO:0005737">
    <property type="term" value="C:cytoplasm"/>
    <property type="evidence" value="ECO:0007669"/>
    <property type="project" value="UniProtKB-SubCell"/>
</dbReference>
<dbReference type="GO" id="GO:0032299">
    <property type="term" value="C:ribonuclease H2 complex"/>
    <property type="evidence" value="ECO:0007669"/>
    <property type="project" value="TreeGrafter"/>
</dbReference>
<dbReference type="GO" id="GO:0000287">
    <property type="term" value="F:magnesium ion binding"/>
    <property type="evidence" value="ECO:0007669"/>
    <property type="project" value="UniProtKB-UniRule"/>
</dbReference>
<dbReference type="GO" id="GO:0003723">
    <property type="term" value="F:RNA binding"/>
    <property type="evidence" value="ECO:0007669"/>
    <property type="project" value="InterPro"/>
</dbReference>
<dbReference type="GO" id="GO:0004523">
    <property type="term" value="F:RNA-DNA hybrid ribonuclease activity"/>
    <property type="evidence" value="ECO:0007669"/>
    <property type="project" value="UniProtKB-UniRule"/>
</dbReference>
<dbReference type="GO" id="GO:0043137">
    <property type="term" value="P:DNA replication, removal of RNA primer"/>
    <property type="evidence" value="ECO:0007669"/>
    <property type="project" value="TreeGrafter"/>
</dbReference>
<dbReference type="GO" id="GO:0006298">
    <property type="term" value="P:mismatch repair"/>
    <property type="evidence" value="ECO:0007669"/>
    <property type="project" value="TreeGrafter"/>
</dbReference>
<dbReference type="CDD" id="cd06590">
    <property type="entry name" value="RNase_HII_bacteria_HIII_like"/>
    <property type="match status" value="1"/>
</dbReference>
<dbReference type="CDD" id="cd14796">
    <property type="entry name" value="RNAse_HIII_N"/>
    <property type="match status" value="1"/>
</dbReference>
<dbReference type="FunFam" id="3.30.420.10:FF:000047">
    <property type="entry name" value="Ribonuclease HIII"/>
    <property type="match status" value="1"/>
</dbReference>
<dbReference type="Gene3D" id="3.30.420.10">
    <property type="entry name" value="Ribonuclease H-like superfamily/Ribonuclease H"/>
    <property type="match status" value="1"/>
</dbReference>
<dbReference type="Gene3D" id="3.30.310.10">
    <property type="entry name" value="TATA-Binding Protein"/>
    <property type="match status" value="1"/>
</dbReference>
<dbReference type="HAMAP" id="MF_00053">
    <property type="entry name" value="RNase_HIII"/>
    <property type="match status" value="1"/>
</dbReference>
<dbReference type="InterPro" id="IPR001352">
    <property type="entry name" value="RNase_HII/HIII"/>
</dbReference>
<dbReference type="InterPro" id="IPR024567">
    <property type="entry name" value="RNase_HII/HIII_dom"/>
</dbReference>
<dbReference type="InterPro" id="IPR004641">
    <property type="entry name" value="RNase_HIII"/>
</dbReference>
<dbReference type="InterPro" id="IPR024568">
    <property type="entry name" value="RNase_HIII_N"/>
</dbReference>
<dbReference type="InterPro" id="IPR012337">
    <property type="entry name" value="RNaseH-like_sf"/>
</dbReference>
<dbReference type="InterPro" id="IPR036397">
    <property type="entry name" value="RNaseH_sf"/>
</dbReference>
<dbReference type="InterPro" id="IPR012295">
    <property type="entry name" value="TBP_dom_sf"/>
</dbReference>
<dbReference type="NCBIfam" id="TIGR00716">
    <property type="entry name" value="rnhC"/>
    <property type="match status" value="1"/>
</dbReference>
<dbReference type="PANTHER" id="PTHR10954:SF23">
    <property type="entry name" value="RIBONUCLEASE"/>
    <property type="match status" value="1"/>
</dbReference>
<dbReference type="PANTHER" id="PTHR10954">
    <property type="entry name" value="RIBONUCLEASE H2 SUBUNIT A"/>
    <property type="match status" value="1"/>
</dbReference>
<dbReference type="Pfam" id="PF11858">
    <property type="entry name" value="DUF3378"/>
    <property type="match status" value="1"/>
</dbReference>
<dbReference type="Pfam" id="PF01351">
    <property type="entry name" value="RNase_HII"/>
    <property type="match status" value="1"/>
</dbReference>
<dbReference type="PIRSF" id="PIRSF037748">
    <property type="entry name" value="RnhC"/>
    <property type="match status" value="1"/>
</dbReference>
<dbReference type="SUPFAM" id="SSF53098">
    <property type="entry name" value="Ribonuclease H-like"/>
    <property type="match status" value="1"/>
</dbReference>
<dbReference type="PROSITE" id="PS51975">
    <property type="entry name" value="RNASE_H_2"/>
    <property type="match status" value="1"/>
</dbReference>
<protein>
    <recommendedName>
        <fullName evidence="1">Ribonuclease HIII</fullName>
        <shortName evidence="1">RNase HIII</shortName>
        <ecNumber evidence="1">3.1.26.4</ecNumber>
    </recommendedName>
</protein>
<accession>Q03IU1</accession>
<comment type="function">
    <text evidence="1">Endonuclease that specifically degrades the RNA of RNA-DNA hybrids.</text>
</comment>
<comment type="catalytic activity">
    <reaction evidence="1">
        <text>Endonucleolytic cleavage to 5'-phosphomonoester.</text>
        <dbReference type="EC" id="3.1.26.4"/>
    </reaction>
</comment>
<comment type="cofactor">
    <cofactor evidence="1">
        <name>Mn(2+)</name>
        <dbReference type="ChEBI" id="CHEBI:29035"/>
    </cofactor>
    <cofactor evidence="1">
        <name>Mg(2+)</name>
        <dbReference type="ChEBI" id="CHEBI:18420"/>
    </cofactor>
    <text evidence="1">Manganese or magnesium. Binds 1 divalent metal ion per monomer in the absence of substrate. May bind a second metal ion after substrate binding.</text>
</comment>
<comment type="subcellular location">
    <subcellularLocation>
        <location evidence="1">Cytoplasm</location>
    </subcellularLocation>
</comment>
<comment type="similarity">
    <text evidence="1">Belongs to the RNase HII family. RnhC subfamily.</text>
</comment>
<feature type="chain" id="PRO_1000031249" description="Ribonuclease HIII">
    <location>
        <begin position="1"/>
        <end position="296"/>
    </location>
</feature>
<feature type="domain" description="RNase H type-2" evidence="2">
    <location>
        <begin position="80"/>
        <end position="296"/>
    </location>
</feature>
<feature type="binding site" evidence="1">
    <location>
        <position position="86"/>
    </location>
    <ligand>
        <name>a divalent metal cation</name>
        <dbReference type="ChEBI" id="CHEBI:60240"/>
    </ligand>
</feature>
<feature type="binding site" evidence="1">
    <location>
        <position position="87"/>
    </location>
    <ligand>
        <name>a divalent metal cation</name>
        <dbReference type="ChEBI" id="CHEBI:60240"/>
    </ligand>
</feature>
<feature type="binding site" evidence="1">
    <location>
        <position position="191"/>
    </location>
    <ligand>
        <name>a divalent metal cation</name>
        <dbReference type="ChEBI" id="CHEBI:60240"/>
    </ligand>
</feature>
<evidence type="ECO:0000255" key="1">
    <source>
        <dbReference type="HAMAP-Rule" id="MF_00053"/>
    </source>
</evidence>
<evidence type="ECO:0000255" key="2">
    <source>
        <dbReference type="PROSITE-ProRule" id="PRU01319"/>
    </source>
</evidence>